<gene>
    <name type="primary">dbr1-a</name>
</gene>
<organism>
    <name type="scientific">Xenopus laevis</name>
    <name type="common">African clawed frog</name>
    <dbReference type="NCBI Taxonomy" id="8355"/>
    <lineage>
        <taxon>Eukaryota</taxon>
        <taxon>Metazoa</taxon>
        <taxon>Chordata</taxon>
        <taxon>Craniata</taxon>
        <taxon>Vertebrata</taxon>
        <taxon>Euteleostomi</taxon>
        <taxon>Amphibia</taxon>
        <taxon>Batrachia</taxon>
        <taxon>Anura</taxon>
        <taxon>Pipoidea</taxon>
        <taxon>Pipidae</taxon>
        <taxon>Xenopodinae</taxon>
        <taxon>Xenopus</taxon>
        <taxon>Xenopus</taxon>
    </lineage>
</organism>
<proteinExistence type="evidence at transcript level"/>
<keyword id="KW-0378">Hydrolase</keyword>
<keyword id="KW-0408">Iron</keyword>
<keyword id="KW-0464">Manganese</keyword>
<keyword id="KW-0479">Metal-binding</keyword>
<keyword id="KW-0507">mRNA processing</keyword>
<keyword id="KW-0539">Nucleus</keyword>
<keyword id="KW-1185">Reference proteome</keyword>
<keyword id="KW-0862">Zinc</keyword>
<reference key="1">
    <citation type="submission" date="2004-06" db="EMBL/GenBank/DDBJ databases">
        <authorList>
            <consortium name="NIH - Xenopus Gene Collection (XGC) project"/>
        </authorList>
    </citation>
    <scope>NUCLEOTIDE SEQUENCE [LARGE SCALE MRNA]</scope>
    <source>
        <tissue>Embryo</tissue>
    </source>
</reference>
<dbReference type="EC" id="3.1.4.-" evidence="3"/>
<dbReference type="EMBL" id="BC073223">
    <property type="protein sequence ID" value="AAH73223.1"/>
    <property type="molecule type" value="mRNA"/>
</dbReference>
<dbReference type="RefSeq" id="NP_001085701.1">
    <property type="nucleotide sequence ID" value="NM_001092232.1"/>
</dbReference>
<dbReference type="RefSeq" id="XP_018089813.1">
    <property type="nucleotide sequence ID" value="XM_018234324.1"/>
</dbReference>
<dbReference type="RefSeq" id="XP_018089814.1">
    <property type="nucleotide sequence ID" value="XM_018234325.1"/>
</dbReference>
<dbReference type="SMR" id="Q6GPB8"/>
<dbReference type="DNASU" id="444127"/>
<dbReference type="GeneID" id="444127"/>
<dbReference type="KEGG" id="xla:444127"/>
<dbReference type="AGR" id="Xenbase:XB-GENE-5852074"/>
<dbReference type="CTD" id="444127"/>
<dbReference type="Xenbase" id="XB-GENE-5852074">
    <property type="gene designation" value="dbr1.L"/>
</dbReference>
<dbReference type="OMA" id="GIDDPLC"/>
<dbReference type="OrthoDB" id="407609at2759"/>
<dbReference type="Proteomes" id="UP000186698">
    <property type="component" value="Chromosome 9_10L"/>
</dbReference>
<dbReference type="Bgee" id="444127">
    <property type="expression patterns" value="Expressed in egg cell and 19 other cell types or tissues"/>
</dbReference>
<dbReference type="GO" id="GO:0005634">
    <property type="term" value="C:nucleus"/>
    <property type="evidence" value="ECO:0000250"/>
    <property type="project" value="UniProtKB"/>
</dbReference>
<dbReference type="GO" id="GO:0046872">
    <property type="term" value="F:metal ion binding"/>
    <property type="evidence" value="ECO:0007669"/>
    <property type="project" value="UniProtKB-KW"/>
</dbReference>
<dbReference type="GO" id="GO:0008419">
    <property type="term" value="F:RNA lariat debranching enzyme activity"/>
    <property type="evidence" value="ECO:0000250"/>
    <property type="project" value="UniProtKB"/>
</dbReference>
<dbReference type="GO" id="GO:0000398">
    <property type="term" value="P:mRNA splicing, via spliceosome"/>
    <property type="evidence" value="ECO:0000318"/>
    <property type="project" value="GO_Central"/>
</dbReference>
<dbReference type="GO" id="GO:0000375">
    <property type="term" value="P:RNA splicing, via transesterification reactions"/>
    <property type="evidence" value="ECO:0000250"/>
    <property type="project" value="UniProtKB"/>
</dbReference>
<dbReference type="CDD" id="cd00844">
    <property type="entry name" value="MPP_Dbr1_N"/>
    <property type="match status" value="1"/>
</dbReference>
<dbReference type="FunFam" id="3.60.21.10:FF:000035">
    <property type="entry name" value="Lariat debranching enzyme"/>
    <property type="match status" value="1"/>
</dbReference>
<dbReference type="Gene3D" id="3.60.21.10">
    <property type="match status" value="1"/>
</dbReference>
<dbReference type="InterPro" id="IPR004843">
    <property type="entry name" value="Calcineurin-like_PHP_ApaH"/>
</dbReference>
<dbReference type="InterPro" id="IPR007708">
    <property type="entry name" value="DBR1_C"/>
</dbReference>
<dbReference type="InterPro" id="IPR041816">
    <property type="entry name" value="Dbr1_N"/>
</dbReference>
<dbReference type="InterPro" id="IPR029052">
    <property type="entry name" value="Metallo-depent_PP-like"/>
</dbReference>
<dbReference type="PANTHER" id="PTHR12849:SF0">
    <property type="entry name" value="LARIAT DEBRANCHING ENZYME"/>
    <property type="match status" value="1"/>
</dbReference>
<dbReference type="PANTHER" id="PTHR12849">
    <property type="entry name" value="RNA LARIAT DEBRANCHING ENZYME"/>
    <property type="match status" value="1"/>
</dbReference>
<dbReference type="Pfam" id="PF05011">
    <property type="entry name" value="DBR1"/>
    <property type="match status" value="1"/>
</dbReference>
<dbReference type="Pfam" id="PF00149">
    <property type="entry name" value="Metallophos"/>
    <property type="match status" value="1"/>
</dbReference>
<dbReference type="SMART" id="SM01124">
    <property type="entry name" value="DBR1"/>
    <property type="match status" value="1"/>
</dbReference>
<dbReference type="SUPFAM" id="SSF56300">
    <property type="entry name" value="Metallo-dependent phosphatases"/>
    <property type="match status" value="1"/>
</dbReference>
<protein>
    <recommendedName>
        <fullName>Lariat debranching enzyme A</fullName>
        <ecNumber evidence="3">3.1.4.-</ecNumber>
    </recommendedName>
</protein>
<name>DBR1A_XENLA</name>
<sequence>MKIAVEGCCHGELDKIYETIQFLEKKENTKVDLLLCCGDFQAVRNEGDMKCMAVPMKYRQMQTFYKYYSGEKKAPILTIFIGGNHEASNYLQELPYGGWVAPNIYYMGYAGVVKYRGVRIGGISGIFKSHDYRKGHFERPPYSKDTVRSAYHVRSIEVFKLKQLKEPMDIFLSHDWPRSIYHYGNKKQLLKKKDFFRQEVEDNTLGSPAASELLLHIQPSYWFSAHLHVKFAAFMQHQNNVGEIPKATKFLALDKCLPHREFLQIVDMEHDPSKPECLEYDLEWLAVLKATKDLLNITSKTWNMPENNGLHARWDFSMSEETKREVLDDLGHDIKIPCNFSVTTACYDPNNPQYKRMPTHIVNPQTTEFCARLGLVDLNVKVRQHEEEKEDFDMTEDNEADSIGSAEDPGEYSTDTSILSTSVNPDEITLEDDDEQEDEGIAEKLGEPSPEYTPDLSVNFSNIRVLPDSMAVSSDDATDSTNDELDRSESSQTEGEGKQSNRPLKRMSNENGSGGVKIKRRNQAIYQAKDDEDE</sequence>
<evidence type="ECO:0000250" key="1">
    <source>
        <dbReference type="UniProtKB" id="C4M1P9"/>
    </source>
</evidence>
<evidence type="ECO:0000250" key="2">
    <source>
        <dbReference type="UniProtKB" id="P24309"/>
    </source>
</evidence>
<evidence type="ECO:0000250" key="3">
    <source>
        <dbReference type="UniProtKB" id="Q9UK59"/>
    </source>
</evidence>
<evidence type="ECO:0000256" key="4">
    <source>
        <dbReference type="SAM" id="MobiDB-lite"/>
    </source>
</evidence>
<evidence type="ECO:0000305" key="5"/>
<comment type="function">
    <text evidence="3">Cleaves the 2'-5' phosphodiester linkage at the branch point of excised lariat intron RNA and converts them into linear molecules that can be subsequently degraded, thereby facilitating ribonucleotide turnover. Linked to its role in pre-mRNA processing mechanism, may also participate in retrovirus replication and have an antiviral cell-intrinsic defense function.</text>
</comment>
<comment type="cofactor">
    <cofactor evidence="2">
        <name>Fe(2+)</name>
        <dbReference type="ChEBI" id="CHEBI:29033"/>
    </cofactor>
    <cofactor evidence="2">
        <name>Zn(2+)</name>
        <dbReference type="ChEBI" id="CHEBI:29105"/>
    </cofactor>
    <cofactor evidence="3">
        <name>Mn(2+)</name>
        <dbReference type="ChEBI" id="CHEBI:29035"/>
    </cofactor>
    <text evidence="2">Binds 2 divalent metal cations per subunit.</text>
</comment>
<comment type="activity regulation">
    <text evidence="2 3">Active in presence of diverse metals including Fe(2+), Zn(2+), Mn(2+) (By similarity). Also activated by Ca(2+) (By similarity). Binds two metal cations in two adjacent alpha and beta metal-binding pockets (By similarity).</text>
</comment>
<comment type="subcellular location">
    <subcellularLocation>
        <location evidence="5">Nucleus</location>
    </subcellularLocation>
</comment>
<comment type="similarity">
    <text evidence="5">Belongs to the lariat debranching enzyme family.</text>
</comment>
<accession>Q6GPB8</accession>
<feature type="chain" id="PRO_0000250362" description="Lariat debranching enzyme A">
    <location>
        <begin position="1"/>
        <end position="534"/>
    </location>
</feature>
<feature type="region of interest" description="Lariat recognition loop" evidence="1">
    <location>
        <begin position="124"/>
        <end position="154"/>
    </location>
</feature>
<feature type="region of interest" description="Disordered" evidence="4">
    <location>
        <begin position="386"/>
        <end position="439"/>
    </location>
</feature>
<feature type="region of interest" description="Disordered" evidence="4">
    <location>
        <begin position="469"/>
        <end position="534"/>
    </location>
</feature>
<feature type="compositionally biased region" description="Acidic residues" evidence="4">
    <location>
        <begin position="388"/>
        <end position="400"/>
    </location>
</feature>
<feature type="compositionally biased region" description="Polar residues" evidence="4">
    <location>
        <begin position="413"/>
        <end position="424"/>
    </location>
</feature>
<feature type="compositionally biased region" description="Acidic residues" evidence="4">
    <location>
        <begin position="428"/>
        <end position="439"/>
    </location>
</feature>
<feature type="compositionally biased region" description="Basic and acidic residues" evidence="4">
    <location>
        <begin position="484"/>
        <end position="499"/>
    </location>
</feature>
<feature type="binding site" evidence="1">
    <location>
        <position position="8"/>
    </location>
    <ligand>
        <name>a divalent metal cation</name>
        <dbReference type="ChEBI" id="CHEBI:60240"/>
        <label>1</label>
    </ligand>
</feature>
<feature type="binding site" evidence="1">
    <location>
        <position position="10"/>
    </location>
    <ligand>
        <name>a divalent metal cation</name>
        <dbReference type="ChEBI" id="CHEBI:60240"/>
        <label>1</label>
    </ligand>
</feature>
<feature type="binding site" evidence="1">
    <location>
        <position position="39"/>
    </location>
    <ligand>
        <name>a divalent metal cation</name>
        <dbReference type="ChEBI" id="CHEBI:60240"/>
        <label>2</label>
    </ligand>
</feature>
<feature type="binding site" evidence="1">
    <location>
        <position position="84"/>
    </location>
    <ligand>
        <name>a divalent metal cation</name>
        <dbReference type="ChEBI" id="CHEBI:60240"/>
        <label>2</label>
    </ligand>
</feature>
<feature type="binding site" evidence="1">
    <location>
        <position position="174"/>
    </location>
    <ligand>
        <name>a divalent metal cation</name>
        <dbReference type="ChEBI" id="CHEBI:60240"/>
        <label>2</label>
    </ligand>
</feature>
<feature type="binding site" evidence="1">
    <location>
        <position position="226"/>
    </location>
    <ligand>
        <name>a divalent metal cation</name>
        <dbReference type="ChEBI" id="CHEBI:60240"/>
        <label>2</label>
    </ligand>
</feature>
<feature type="binding site" evidence="1">
    <location>
        <position position="228"/>
    </location>
    <ligand>
        <name>a divalent metal cation</name>
        <dbReference type="ChEBI" id="CHEBI:60240"/>
        <label>1</label>
    </ligand>
</feature>